<feature type="chain" id="PRO_1000022840" description="2-C-methyl-D-erythritol 2,4-cyclodiphosphate synthase">
    <location>
        <begin position="1"/>
        <end position="159"/>
    </location>
</feature>
<feature type="binding site" evidence="1">
    <location>
        <begin position="10"/>
        <end position="12"/>
    </location>
    <ligand>
        <name>4-CDP-2-C-methyl-D-erythritol 2-phosphate</name>
        <dbReference type="ChEBI" id="CHEBI:57919"/>
    </ligand>
</feature>
<feature type="binding site" evidence="1">
    <location>
        <position position="10"/>
    </location>
    <ligand>
        <name>a divalent metal cation</name>
        <dbReference type="ChEBI" id="CHEBI:60240"/>
    </ligand>
</feature>
<feature type="binding site" evidence="1">
    <location>
        <position position="12"/>
    </location>
    <ligand>
        <name>a divalent metal cation</name>
        <dbReference type="ChEBI" id="CHEBI:60240"/>
    </ligand>
</feature>
<feature type="binding site" evidence="1">
    <location>
        <begin position="37"/>
        <end position="38"/>
    </location>
    <ligand>
        <name>4-CDP-2-C-methyl-D-erythritol 2-phosphate</name>
        <dbReference type="ChEBI" id="CHEBI:57919"/>
    </ligand>
</feature>
<feature type="binding site" evidence="1">
    <location>
        <position position="45"/>
    </location>
    <ligand>
        <name>a divalent metal cation</name>
        <dbReference type="ChEBI" id="CHEBI:60240"/>
    </ligand>
</feature>
<feature type="binding site" evidence="1">
    <location>
        <begin position="59"/>
        <end position="61"/>
    </location>
    <ligand>
        <name>4-CDP-2-C-methyl-D-erythritol 2-phosphate</name>
        <dbReference type="ChEBI" id="CHEBI:57919"/>
    </ligand>
</feature>
<feature type="binding site" evidence="1">
    <location>
        <begin position="64"/>
        <end position="68"/>
    </location>
    <ligand>
        <name>4-CDP-2-C-methyl-D-erythritol 2-phosphate</name>
        <dbReference type="ChEBI" id="CHEBI:57919"/>
    </ligand>
</feature>
<feature type="binding site" evidence="1">
    <location>
        <begin position="103"/>
        <end position="109"/>
    </location>
    <ligand>
        <name>4-CDP-2-C-methyl-D-erythritol 2-phosphate</name>
        <dbReference type="ChEBI" id="CHEBI:57919"/>
    </ligand>
</feature>
<feature type="binding site" evidence="1">
    <location>
        <begin position="135"/>
        <end position="138"/>
    </location>
    <ligand>
        <name>4-CDP-2-C-methyl-D-erythritol 2-phosphate</name>
        <dbReference type="ChEBI" id="CHEBI:57919"/>
    </ligand>
</feature>
<feature type="binding site" evidence="1">
    <location>
        <position position="142"/>
    </location>
    <ligand>
        <name>4-CDP-2-C-methyl-D-erythritol 2-phosphate</name>
        <dbReference type="ChEBI" id="CHEBI:57919"/>
    </ligand>
</feature>
<feature type="binding site" evidence="1">
    <location>
        <position position="145"/>
    </location>
    <ligand>
        <name>4-CDP-2-C-methyl-D-erythritol 2-phosphate</name>
        <dbReference type="ChEBI" id="CHEBI:57919"/>
    </ligand>
</feature>
<feature type="site" description="Transition state stabilizer" evidence="1">
    <location>
        <position position="37"/>
    </location>
</feature>
<feature type="site" description="Transition state stabilizer" evidence="1">
    <location>
        <position position="136"/>
    </location>
</feature>
<keyword id="KW-0414">Isoprene biosynthesis</keyword>
<keyword id="KW-0456">Lyase</keyword>
<keyword id="KW-0479">Metal-binding</keyword>
<proteinExistence type="inferred from homology"/>
<comment type="function">
    <text evidence="1">Involved in the biosynthesis of isopentenyl diphosphate (IPP) and dimethylallyl diphosphate (DMAPP), two major building blocks of isoprenoid compounds. Catalyzes the conversion of 4-diphosphocytidyl-2-C-methyl-D-erythritol 2-phosphate (CDP-ME2P) to 2-C-methyl-D-erythritol 2,4-cyclodiphosphate (ME-CPP) with a corresponding release of cytidine 5-monophosphate (CMP).</text>
</comment>
<comment type="catalytic activity">
    <reaction evidence="1">
        <text>4-CDP-2-C-methyl-D-erythritol 2-phosphate = 2-C-methyl-D-erythritol 2,4-cyclic diphosphate + CMP</text>
        <dbReference type="Rhea" id="RHEA:23864"/>
        <dbReference type="ChEBI" id="CHEBI:57919"/>
        <dbReference type="ChEBI" id="CHEBI:58483"/>
        <dbReference type="ChEBI" id="CHEBI:60377"/>
        <dbReference type="EC" id="4.6.1.12"/>
    </reaction>
</comment>
<comment type="cofactor">
    <cofactor evidence="1">
        <name>a divalent metal cation</name>
        <dbReference type="ChEBI" id="CHEBI:60240"/>
    </cofactor>
    <text evidence="1">Binds 1 divalent metal cation per subunit.</text>
</comment>
<comment type="pathway">
    <text evidence="1">Isoprenoid biosynthesis; isopentenyl diphosphate biosynthesis via DXP pathway; isopentenyl diphosphate from 1-deoxy-D-xylulose 5-phosphate: step 4/6.</text>
</comment>
<comment type="subunit">
    <text evidence="1">Homotrimer.</text>
</comment>
<comment type="similarity">
    <text evidence="1">Belongs to the IspF family.</text>
</comment>
<dbReference type="EC" id="4.6.1.12" evidence="1"/>
<dbReference type="EMBL" id="CP000437">
    <property type="protein sequence ID" value="ABI82752.1"/>
    <property type="molecule type" value="Genomic_DNA"/>
</dbReference>
<dbReference type="RefSeq" id="WP_011648636.1">
    <property type="nucleotide sequence ID" value="NC_017463.1"/>
</dbReference>
<dbReference type="SMR" id="Q0BMD2"/>
<dbReference type="KEGG" id="fth:FTH_0823"/>
<dbReference type="UniPathway" id="UPA00056">
    <property type="reaction ID" value="UER00095"/>
</dbReference>
<dbReference type="GO" id="GO:0008685">
    <property type="term" value="F:2-C-methyl-D-erythritol 2,4-cyclodiphosphate synthase activity"/>
    <property type="evidence" value="ECO:0007669"/>
    <property type="project" value="UniProtKB-UniRule"/>
</dbReference>
<dbReference type="GO" id="GO:0046872">
    <property type="term" value="F:metal ion binding"/>
    <property type="evidence" value="ECO:0007669"/>
    <property type="project" value="UniProtKB-KW"/>
</dbReference>
<dbReference type="GO" id="GO:0019288">
    <property type="term" value="P:isopentenyl diphosphate biosynthetic process, methylerythritol 4-phosphate pathway"/>
    <property type="evidence" value="ECO:0007669"/>
    <property type="project" value="UniProtKB-UniRule"/>
</dbReference>
<dbReference type="GO" id="GO:0016114">
    <property type="term" value="P:terpenoid biosynthetic process"/>
    <property type="evidence" value="ECO:0007669"/>
    <property type="project" value="InterPro"/>
</dbReference>
<dbReference type="CDD" id="cd00554">
    <property type="entry name" value="MECDP_synthase"/>
    <property type="match status" value="1"/>
</dbReference>
<dbReference type="FunFam" id="3.30.1330.50:FF:000001">
    <property type="entry name" value="2-C-methyl-D-erythritol 2,4-cyclodiphosphate synthase"/>
    <property type="match status" value="1"/>
</dbReference>
<dbReference type="Gene3D" id="3.30.1330.50">
    <property type="entry name" value="2-C-methyl-D-erythritol 2,4-cyclodiphosphate synthase"/>
    <property type="match status" value="1"/>
</dbReference>
<dbReference type="HAMAP" id="MF_00107">
    <property type="entry name" value="IspF"/>
    <property type="match status" value="1"/>
</dbReference>
<dbReference type="InterPro" id="IPR003526">
    <property type="entry name" value="MECDP_synthase"/>
</dbReference>
<dbReference type="InterPro" id="IPR020555">
    <property type="entry name" value="MECDP_synthase_CS"/>
</dbReference>
<dbReference type="InterPro" id="IPR036571">
    <property type="entry name" value="MECDP_synthase_sf"/>
</dbReference>
<dbReference type="NCBIfam" id="TIGR00151">
    <property type="entry name" value="ispF"/>
    <property type="match status" value="1"/>
</dbReference>
<dbReference type="PANTHER" id="PTHR43181">
    <property type="entry name" value="2-C-METHYL-D-ERYTHRITOL 2,4-CYCLODIPHOSPHATE SYNTHASE, CHLOROPLASTIC"/>
    <property type="match status" value="1"/>
</dbReference>
<dbReference type="PANTHER" id="PTHR43181:SF1">
    <property type="entry name" value="2-C-METHYL-D-ERYTHRITOL 2,4-CYCLODIPHOSPHATE SYNTHASE, CHLOROPLASTIC"/>
    <property type="match status" value="1"/>
</dbReference>
<dbReference type="Pfam" id="PF02542">
    <property type="entry name" value="YgbB"/>
    <property type="match status" value="1"/>
</dbReference>
<dbReference type="SUPFAM" id="SSF69765">
    <property type="entry name" value="IpsF-like"/>
    <property type="match status" value="1"/>
</dbReference>
<dbReference type="PROSITE" id="PS01350">
    <property type="entry name" value="ISPF"/>
    <property type="match status" value="1"/>
</dbReference>
<accession>Q0BMD2</accession>
<gene>
    <name evidence="1" type="primary">ispF</name>
    <name type="ordered locus">FTH_0823</name>
</gene>
<protein>
    <recommendedName>
        <fullName evidence="1">2-C-methyl-D-erythritol 2,4-cyclodiphosphate synthase</fullName>
        <shortName evidence="1">MECDP-synthase</shortName>
        <shortName evidence="1">MECPP-synthase</shortName>
        <shortName evidence="1">MECPS</shortName>
        <ecNumber evidence="1">4.6.1.12</ecNumber>
    </recommendedName>
</protein>
<reference key="1">
    <citation type="journal article" date="2006" name="J. Bacteriol.">
        <title>Chromosome rearrangement and diversification of Francisella tularensis revealed by the type B (OSU18) genome sequence.</title>
        <authorList>
            <person name="Petrosino J.F."/>
            <person name="Xiang Q."/>
            <person name="Karpathy S.E."/>
            <person name="Jiang H."/>
            <person name="Yerrapragada S."/>
            <person name="Liu Y."/>
            <person name="Gioia J."/>
            <person name="Hemphill L."/>
            <person name="Gonzalez A."/>
            <person name="Raghavan T.M."/>
            <person name="Uzman A."/>
            <person name="Fox G.E."/>
            <person name="Highlander S."/>
            <person name="Reichard M."/>
            <person name="Morton R.J."/>
            <person name="Clinkenbeard K.D."/>
            <person name="Weinstock G.M."/>
        </authorList>
    </citation>
    <scope>NUCLEOTIDE SEQUENCE [LARGE SCALE GENOMIC DNA]</scope>
    <source>
        <strain>OSU18</strain>
    </source>
</reference>
<organism>
    <name type="scientific">Francisella tularensis subsp. holarctica (strain OSU18)</name>
    <dbReference type="NCBI Taxonomy" id="393011"/>
    <lineage>
        <taxon>Bacteria</taxon>
        <taxon>Pseudomonadati</taxon>
        <taxon>Pseudomonadota</taxon>
        <taxon>Gammaproteobacteria</taxon>
        <taxon>Thiotrichales</taxon>
        <taxon>Francisellaceae</taxon>
        <taxon>Francisella</taxon>
    </lineage>
</organism>
<evidence type="ECO:0000255" key="1">
    <source>
        <dbReference type="HAMAP-Rule" id="MF_00107"/>
    </source>
</evidence>
<sequence length="159" mass="17666">MSFRIGHGYDVHKFTSAKQNIIIGGVEIAYHLGLEAHSDGDVLIHALCDAIIGALGLGDIGKHFLDTDNQFKNIDSKFFLAEIKKMLDEKQYSISNIDCTIIAQAPKMLPHIEKMRACLANILEIQISQINIKATTTERLGFIGREEGIATHVVCLLYR</sequence>
<name>ISPF_FRATO</name>